<sequence length="300" mass="32534">MKIAILSRDGTLYSCKRLREAAIQRGHLVEILDPLSCYMNINPAASSIHYKGRKLPHFDAVIPRIGTAITFYGTAALRQFEMLGSYPLNESVAIARARDKLRSMQLLARQGIDLPVTGIAHSPDDTSDLIDMVGGAPLVVKLVEGTQGIGVVLAETRQAAESVIDAFRGLNAHILVQEYIKEAQGCDIRCLVVGDEVVAAIERRAKEGDFRSNLHRGGVASVARITPQEREIAIKAARTMALDVAGVDILRANRGPLVMEVNASPGLEGIEKTTGIDIAGKMIRWIERHATTEYCLKTGG</sequence>
<comment type="function">
    <text evidence="1">An L-glutamate ligase that catalyzes the ATP-dependent post-translational addition of glutamate residues to the C-terminus of ribosomal protein bS6 (RpsF). Is also able to catalyze the synthesis of poly-alpha-glutamate in vitro, via ATP hydrolysis from unprotected glutamate as substrate. The number of glutamate residues added to either RpsF or to poly-alpha-glutamate changes with pH.</text>
</comment>
<comment type="cofactor">
    <cofactor evidence="1">
        <name>Mg(2+)</name>
        <dbReference type="ChEBI" id="CHEBI:18420"/>
    </cofactor>
    <cofactor evidence="1">
        <name>Mn(2+)</name>
        <dbReference type="ChEBI" id="CHEBI:29035"/>
    </cofactor>
    <text evidence="1">Binds 2 magnesium or manganese ions per subunit.</text>
</comment>
<comment type="similarity">
    <text evidence="1">Belongs to the RimK family.</text>
</comment>
<dbReference type="EC" id="6.3.2.-" evidence="1"/>
<dbReference type="EMBL" id="CU928164">
    <property type="protein sequence ID" value="CAR16968.1"/>
    <property type="molecule type" value="Genomic_DNA"/>
</dbReference>
<dbReference type="RefSeq" id="WP_000684328.1">
    <property type="nucleotide sequence ID" value="NC_011750.1"/>
</dbReference>
<dbReference type="RefSeq" id="YP_002406856.1">
    <property type="nucleotide sequence ID" value="NC_011750.1"/>
</dbReference>
<dbReference type="SMR" id="B7NPE7"/>
<dbReference type="STRING" id="585057.ECIAI39_0831"/>
<dbReference type="KEGG" id="ect:ECIAI39_0831"/>
<dbReference type="PATRIC" id="fig|585057.6.peg.876"/>
<dbReference type="HOGENOM" id="CLU_054353_0_1_6"/>
<dbReference type="Proteomes" id="UP000000749">
    <property type="component" value="Chromosome"/>
</dbReference>
<dbReference type="GO" id="GO:0005737">
    <property type="term" value="C:cytoplasm"/>
    <property type="evidence" value="ECO:0007669"/>
    <property type="project" value="TreeGrafter"/>
</dbReference>
<dbReference type="GO" id="GO:0005524">
    <property type="term" value="F:ATP binding"/>
    <property type="evidence" value="ECO:0007669"/>
    <property type="project" value="UniProtKB-UniRule"/>
</dbReference>
<dbReference type="GO" id="GO:0046872">
    <property type="term" value="F:metal ion binding"/>
    <property type="evidence" value="ECO:0007669"/>
    <property type="project" value="UniProtKB-KW"/>
</dbReference>
<dbReference type="GO" id="GO:0018169">
    <property type="term" value="F:ribosomal S6-glutamic acid ligase activity"/>
    <property type="evidence" value="ECO:0007669"/>
    <property type="project" value="UniProtKB-UniRule"/>
</dbReference>
<dbReference type="GO" id="GO:0036211">
    <property type="term" value="P:protein modification process"/>
    <property type="evidence" value="ECO:0007669"/>
    <property type="project" value="InterPro"/>
</dbReference>
<dbReference type="GO" id="GO:0009432">
    <property type="term" value="P:SOS response"/>
    <property type="evidence" value="ECO:0007669"/>
    <property type="project" value="TreeGrafter"/>
</dbReference>
<dbReference type="GO" id="GO:0006412">
    <property type="term" value="P:translation"/>
    <property type="evidence" value="ECO:0007669"/>
    <property type="project" value="UniProtKB-KW"/>
</dbReference>
<dbReference type="FunFam" id="3.40.50.20:FF:000004">
    <property type="entry name" value="Probable alpha-L-glutamate ligase"/>
    <property type="match status" value="1"/>
</dbReference>
<dbReference type="FunFam" id="3.30.1490.20:FF:000005">
    <property type="entry name" value="Probable alpha-L-glutamate ligase 1"/>
    <property type="match status" value="1"/>
</dbReference>
<dbReference type="FunFam" id="3.30.470.20:FF:000016">
    <property type="entry name" value="Ribosomal protein S6--L-glutamate ligase"/>
    <property type="match status" value="1"/>
</dbReference>
<dbReference type="Gene3D" id="3.40.50.20">
    <property type="match status" value="1"/>
</dbReference>
<dbReference type="Gene3D" id="3.30.1490.20">
    <property type="entry name" value="ATP-grasp fold, A domain"/>
    <property type="match status" value="1"/>
</dbReference>
<dbReference type="Gene3D" id="3.30.470.20">
    <property type="entry name" value="ATP-grasp fold, B domain"/>
    <property type="match status" value="1"/>
</dbReference>
<dbReference type="HAMAP" id="MF_01552">
    <property type="entry name" value="RimK"/>
    <property type="match status" value="1"/>
</dbReference>
<dbReference type="InterPro" id="IPR011761">
    <property type="entry name" value="ATP-grasp"/>
</dbReference>
<dbReference type="InterPro" id="IPR013651">
    <property type="entry name" value="ATP-grasp_RimK-type"/>
</dbReference>
<dbReference type="InterPro" id="IPR013815">
    <property type="entry name" value="ATP_grasp_subdomain_1"/>
</dbReference>
<dbReference type="InterPro" id="IPR023533">
    <property type="entry name" value="RimK"/>
</dbReference>
<dbReference type="InterPro" id="IPR041107">
    <property type="entry name" value="Rimk_N"/>
</dbReference>
<dbReference type="InterPro" id="IPR004666">
    <property type="entry name" value="Rp_bS6_RimK/Lys_biosynth_LsyX"/>
</dbReference>
<dbReference type="NCBIfam" id="NF007764">
    <property type="entry name" value="PRK10446.1"/>
    <property type="match status" value="1"/>
</dbReference>
<dbReference type="NCBIfam" id="TIGR00768">
    <property type="entry name" value="rimK_fam"/>
    <property type="match status" value="1"/>
</dbReference>
<dbReference type="PANTHER" id="PTHR21621:SF7">
    <property type="entry name" value="RIBOSOMAL PROTEIN BS6--L-GLUTAMATE LIGASE"/>
    <property type="match status" value="1"/>
</dbReference>
<dbReference type="PANTHER" id="PTHR21621">
    <property type="entry name" value="RIBOSOMAL PROTEIN S6 MODIFICATION PROTEIN"/>
    <property type="match status" value="1"/>
</dbReference>
<dbReference type="Pfam" id="PF08443">
    <property type="entry name" value="RimK"/>
    <property type="match status" value="1"/>
</dbReference>
<dbReference type="Pfam" id="PF18030">
    <property type="entry name" value="Rimk_N"/>
    <property type="match status" value="1"/>
</dbReference>
<dbReference type="SUPFAM" id="SSF56059">
    <property type="entry name" value="Glutathione synthetase ATP-binding domain-like"/>
    <property type="match status" value="1"/>
</dbReference>
<dbReference type="PROSITE" id="PS50975">
    <property type="entry name" value="ATP_GRASP"/>
    <property type="match status" value="1"/>
</dbReference>
<feature type="chain" id="PRO_1000194368" description="Ribosomal protein bS6--L-glutamate ligase">
    <location>
        <begin position="1"/>
        <end position="300"/>
    </location>
</feature>
<feature type="domain" description="ATP-grasp" evidence="1">
    <location>
        <begin position="104"/>
        <end position="287"/>
    </location>
</feature>
<feature type="binding site" evidence="1">
    <location>
        <position position="141"/>
    </location>
    <ligand>
        <name>ATP</name>
        <dbReference type="ChEBI" id="CHEBI:30616"/>
    </ligand>
</feature>
<feature type="binding site" evidence="1">
    <location>
        <begin position="178"/>
        <end position="179"/>
    </location>
    <ligand>
        <name>ATP</name>
        <dbReference type="ChEBI" id="CHEBI:30616"/>
    </ligand>
</feature>
<feature type="binding site" evidence="1">
    <location>
        <position position="187"/>
    </location>
    <ligand>
        <name>ATP</name>
        <dbReference type="ChEBI" id="CHEBI:30616"/>
    </ligand>
</feature>
<feature type="binding site" evidence="1">
    <location>
        <begin position="211"/>
        <end position="213"/>
    </location>
    <ligand>
        <name>ATP</name>
        <dbReference type="ChEBI" id="CHEBI:30616"/>
    </ligand>
</feature>
<feature type="binding site" evidence="1">
    <location>
        <position position="248"/>
    </location>
    <ligand>
        <name>Mg(2+)</name>
        <dbReference type="ChEBI" id="CHEBI:18420"/>
        <label>1</label>
    </ligand>
</feature>
<feature type="binding site" evidence="1">
    <location>
        <position position="248"/>
    </location>
    <ligand>
        <name>Mn(2+)</name>
        <dbReference type="ChEBI" id="CHEBI:29035"/>
        <label>1</label>
    </ligand>
</feature>
<feature type="binding site" evidence="1">
    <location>
        <position position="260"/>
    </location>
    <ligand>
        <name>Mg(2+)</name>
        <dbReference type="ChEBI" id="CHEBI:18420"/>
        <label>1</label>
    </ligand>
</feature>
<feature type="binding site" evidence="1">
    <location>
        <position position="260"/>
    </location>
    <ligand>
        <name>Mg(2+)</name>
        <dbReference type="ChEBI" id="CHEBI:18420"/>
        <label>2</label>
    </ligand>
</feature>
<feature type="binding site" evidence="1">
    <location>
        <position position="260"/>
    </location>
    <ligand>
        <name>Mn(2+)</name>
        <dbReference type="ChEBI" id="CHEBI:29035"/>
        <label>1</label>
    </ligand>
</feature>
<feature type="binding site" evidence="1">
    <location>
        <position position="260"/>
    </location>
    <ligand>
        <name>Mn(2+)</name>
        <dbReference type="ChEBI" id="CHEBI:29035"/>
        <label>2</label>
    </ligand>
</feature>
<feature type="binding site" evidence="1">
    <location>
        <position position="262"/>
    </location>
    <ligand>
        <name>Mg(2+)</name>
        <dbReference type="ChEBI" id="CHEBI:18420"/>
        <label>2</label>
    </ligand>
</feature>
<feature type="binding site" evidence="1">
    <location>
        <position position="262"/>
    </location>
    <ligand>
        <name>Mn(2+)</name>
        <dbReference type="ChEBI" id="CHEBI:29035"/>
        <label>2</label>
    </ligand>
</feature>
<evidence type="ECO:0000255" key="1">
    <source>
        <dbReference type="HAMAP-Rule" id="MF_01552"/>
    </source>
</evidence>
<organism>
    <name type="scientific">Escherichia coli O7:K1 (strain IAI39 / ExPEC)</name>
    <dbReference type="NCBI Taxonomy" id="585057"/>
    <lineage>
        <taxon>Bacteria</taxon>
        <taxon>Pseudomonadati</taxon>
        <taxon>Pseudomonadota</taxon>
        <taxon>Gammaproteobacteria</taxon>
        <taxon>Enterobacterales</taxon>
        <taxon>Enterobacteriaceae</taxon>
        <taxon>Escherichia</taxon>
    </lineage>
</organism>
<accession>B7NPE7</accession>
<name>RIMK_ECO7I</name>
<protein>
    <recommendedName>
        <fullName evidence="1">Ribosomal protein bS6--L-glutamate ligase</fullName>
        <ecNumber evidence="1">6.3.2.-</ecNumber>
    </recommendedName>
    <alternativeName>
        <fullName evidence="1">Poly-alpha-glutamate synthase</fullName>
    </alternativeName>
    <alternativeName>
        <fullName evidence="1">Ribosomal protein bS6 modification protein</fullName>
    </alternativeName>
</protein>
<proteinExistence type="inferred from homology"/>
<reference key="1">
    <citation type="journal article" date="2009" name="PLoS Genet.">
        <title>Organised genome dynamics in the Escherichia coli species results in highly diverse adaptive paths.</title>
        <authorList>
            <person name="Touchon M."/>
            <person name="Hoede C."/>
            <person name="Tenaillon O."/>
            <person name="Barbe V."/>
            <person name="Baeriswyl S."/>
            <person name="Bidet P."/>
            <person name="Bingen E."/>
            <person name="Bonacorsi S."/>
            <person name="Bouchier C."/>
            <person name="Bouvet O."/>
            <person name="Calteau A."/>
            <person name="Chiapello H."/>
            <person name="Clermont O."/>
            <person name="Cruveiller S."/>
            <person name="Danchin A."/>
            <person name="Diard M."/>
            <person name="Dossat C."/>
            <person name="Karoui M.E."/>
            <person name="Frapy E."/>
            <person name="Garry L."/>
            <person name="Ghigo J.M."/>
            <person name="Gilles A.M."/>
            <person name="Johnson J."/>
            <person name="Le Bouguenec C."/>
            <person name="Lescat M."/>
            <person name="Mangenot S."/>
            <person name="Martinez-Jehanne V."/>
            <person name="Matic I."/>
            <person name="Nassif X."/>
            <person name="Oztas S."/>
            <person name="Petit M.A."/>
            <person name="Pichon C."/>
            <person name="Rouy Z."/>
            <person name="Ruf C.S."/>
            <person name="Schneider D."/>
            <person name="Tourret J."/>
            <person name="Vacherie B."/>
            <person name="Vallenet D."/>
            <person name="Medigue C."/>
            <person name="Rocha E.P.C."/>
            <person name="Denamur E."/>
        </authorList>
    </citation>
    <scope>NUCLEOTIDE SEQUENCE [LARGE SCALE GENOMIC DNA]</scope>
    <source>
        <strain>IAI39 / ExPEC</strain>
    </source>
</reference>
<gene>
    <name evidence="1" type="primary">rimK</name>
    <name type="ordered locus">ECIAI39_0831</name>
</gene>
<keyword id="KW-0067">ATP-binding</keyword>
<keyword id="KW-0436">Ligase</keyword>
<keyword id="KW-0460">Magnesium</keyword>
<keyword id="KW-0464">Manganese</keyword>
<keyword id="KW-0479">Metal-binding</keyword>
<keyword id="KW-0547">Nucleotide-binding</keyword>
<keyword id="KW-0648">Protein biosynthesis</keyword>